<feature type="transit peptide" description="Mitochondrion" evidence="2">
    <location>
        <begin position="1"/>
        <end position="65"/>
    </location>
</feature>
<feature type="chain" id="PRO_0000388701" description="NFU1 iron-sulfur cluster scaffold homolog, mitochondrial" evidence="2">
    <location>
        <begin position="66"/>
        <end position="283"/>
    </location>
</feature>
<feature type="region of interest" description="NifU" evidence="2">
    <location>
        <begin position="182"/>
        <end position="250"/>
    </location>
</feature>
<feature type="binding site" evidence="1">
    <location>
        <position position="219"/>
    </location>
    <ligand>
        <name>[4Fe-4S] cluster</name>
        <dbReference type="ChEBI" id="CHEBI:49883"/>
        <note>ligand shared between dimeric partners</note>
    </ligand>
</feature>
<feature type="binding site" evidence="1">
    <location>
        <position position="222"/>
    </location>
    <ligand>
        <name>[4Fe-4S] cluster</name>
        <dbReference type="ChEBI" id="CHEBI:49883"/>
        <note>ligand shared between dimeric partners</note>
    </ligand>
</feature>
<organism>
    <name type="scientific">Drosophila sechellia</name>
    <name type="common">Fruit fly</name>
    <dbReference type="NCBI Taxonomy" id="7238"/>
    <lineage>
        <taxon>Eukaryota</taxon>
        <taxon>Metazoa</taxon>
        <taxon>Ecdysozoa</taxon>
        <taxon>Arthropoda</taxon>
        <taxon>Hexapoda</taxon>
        <taxon>Insecta</taxon>
        <taxon>Pterygota</taxon>
        <taxon>Neoptera</taxon>
        <taxon>Endopterygota</taxon>
        <taxon>Diptera</taxon>
        <taxon>Brachycera</taxon>
        <taxon>Muscomorpha</taxon>
        <taxon>Ephydroidea</taxon>
        <taxon>Drosophilidae</taxon>
        <taxon>Drosophila</taxon>
        <taxon>Sophophora</taxon>
    </lineage>
</organism>
<accession>B4IMF6</accession>
<name>NFU1_DROSE</name>
<reference evidence="4" key="1">
    <citation type="journal article" date="2007" name="Nature">
        <title>Evolution of genes and genomes on the Drosophila phylogeny.</title>
        <authorList>
            <consortium name="Drosophila 12 genomes consortium"/>
        </authorList>
    </citation>
    <scope>NUCLEOTIDE SEQUENCE [LARGE SCALE GENOMIC DNA]</scope>
    <source>
        <strain evidence="4">Rob3c / Tucson 14021-0248.25</strain>
    </source>
</reference>
<gene>
    <name type="ORF">GM13534</name>
</gene>
<evidence type="ECO:0000250" key="1">
    <source>
        <dbReference type="UniProtKB" id="Q9UMS0"/>
    </source>
</evidence>
<evidence type="ECO:0000255" key="2"/>
<evidence type="ECO:0000305" key="3"/>
<evidence type="ECO:0000312" key="4">
    <source>
        <dbReference type="EMBL" id="EDW46094.1"/>
    </source>
</evidence>
<proteinExistence type="inferred from homology"/>
<protein>
    <recommendedName>
        <fullName evidence="1">NFU1 iron-sulfur cluster scaffold homolog, mitochondrial</fullName>
    </recommendedName>
</protein>
<keyword id="KW-0408">Iron</keyword>
<keyword id="KW-0411">Iron-sulfur</keyword>
<keyword id="KW-0479">Metal-binding</keyword>
<keyword id="KW-0496">Mitochondrion</keyword>
<keyword id="KW-1185">Reference proteome</keyword>
<keyword id="KW-0809">Transit peptide</keyword>
<dbReference type="EMBL" id="CH480992">
    <property type="protein sequence ID" value="EDW46094.1"/>
    <property type="molecule type" value="Genomic_DNA"/>
</dbReference>
<dbReference type="SMR" id="B4IMF6"/>
<dbReference type="STRING" id="7238.B4IMF6"/>
<dbReference type="EnsemblMetazoa" id="FBtr0196519">
    <property type="protein sequence ID" value="FBpp0195011"/>
    <property type="gene ID" value="FBgn0168465"/>
</dbReference>
<dbReference type="EnsemblMetazoa" id="XM_002044880.2">
    <property type="protein sequence ID" value="XP_002044916.1"/>
    <property type="gene ID" value="LOC6620715"/>
</dbReference>
<dbReference type="EnsemblMetazoa" id="XM_032726220.1">
    <property type="protein sequence ID" value="XP_032582111.1"/>
    <property type="gene ID" value="LOC6621332"/>
</dbReference>
<dbReference type="GeneID" id="6620715"/>
<dbReference type="KEGG" id="dse:6620715"/>
<dbReference type="HOGENOM" id="CLU_060555_0_2_1"/>
<dbReference type="OMA" id="AIMEHYM"/>
<dbReference type="OrthoDB" id="15045at7215"/>
<dbReference type="PhylomeDB" id="B4IMF6"/>
<dbReference type="Proteomes" id="UP000001292">
    <property type="component" value="Unassembled WGS sequence"/>
</dbReference>
<dbReference type="GO" id="GO:0005739">
    <property type="term" value="C:mitochondrion"/>
    <property type="evidence" value="ECO:0007669"/>
    <property type="project" value="UniProtKB-SubCell"/>
</dbReference>
<dbReference type="GO" id="GO:0005506">
    <property type="term" value="F:iron ion binding"/>
    <property type="evidence" value="ECO:0007669"/>
    <property type="project" value="InterPro"/>
</dbReference>
<dbReference type="GO" id="GO:0051536">
    <property type="term" value="F:iron-sulfur cluster binding"/>
    <property type="evidence" value="ECO:0007669"/>
    <property type="project" value="UniProtKB-KW"/>
</dbReference>
<dbReference type="GO" id="GO:0016226">
    <property type="term" value="P:iron-sulfur cluster assembly"/>
    <property type="evidence" value="ECO:0007669"/>
    <property type="project" value="InterPro"/>
</dbReference>
<dbReference type="FunFam" id="3.30.300.130:FF:000001">
    <property type="entry name" value="NFU1 iron-sulfur cluster scaffold"/>
    <property type="match status" value="1"/>
</dbReference>
<dbReference type="FunFam" id="3.30.1370.70:FF:000002">
    <property type="entry name" value="NFU1 iron-sulfur cluster scaffold homolog, mitochondrial"/>
    <property type="match status" value="1"/>
</dbReference>
<dbReference type="Gene3D" id="3.30.300.130">
    <property type="entry name" value="Fe-S cluster assembly (FSCA)"/>
    <property type="match status" value="1"/>
</dbReference>
<dbReference type="Gene3D" id="3.30.1370.70">
    <property type="entry name" value="Scaffold protein Nfu/NifU, N-terminal domain"/>
    <property type="match status" value="1"/>
</dbReference>
<dbReference type="InterPro" id="IPR034904">
    <property type="entry name" value="FSCA_dom_sf"/>
</dbReference>
<dbReference type="InterPro" id="IPR014824">
    <property type="entry name" value="Nfu/NifU_N"/>
</dbReference>
<dbReference type="InterPro" id="IPR036498">
    <property type="entry name" value="Nfu/NifU_N_sf"/>
</dbReference>
<dbReference type="InterPro" id="IPR001075">
    <property type="entry name" value="NIF_FeS_clus_asmbl_NifU_C"/>
</dbReference>
<dbReference type="InterPro" id="IPR000629">
    <property type="entry name" value="RNA-helicase_DEAD-box_CS"/>
</dbReference>
<dbReference type="PANTHER" id="PTHR11178">
    <property type="entry name" value="IRON-SULFUR CLUSTER SCAFFOLD PROTEIN NFU-RELATED"/>
    <property type="match status" value="1"/>
</dbReference>
<dbReference type="PANTHER" id="PTHR11178:SF1">
    <property type="entry name" value="NFU1 IRON-SULFUR CLUSTER SCAFFOLD HOMOLOG, MITOCHONDRIAL"/>
    <property type="match status" value="1"/>
</dbReference>
<dbReference type="Pfam" id="PF08712">
    <property type="entry name" value="Nfu_N"/>
    <property type="match status" value="1"/>
</dbReference>
<dbReference type="Pfam" id="PF01106">
    <property type="entry name" value="NifU"/>
    <property type="match status" value="1"/>
</dbReference>
<dbReference type="SMART" id="SM00932">
    <property type="entry name" value="Nfu_N"/>
    <property type="match status" value="1"/>
</dbReference>
<dbReference type="SUPFAM" id="SSF117916">
    <property type="entry name" value="Fe-S cluster assembly (FSCA) domain-like"/>
    <property type="match status" value="1"/>
</dbReference>
<dbReference type="SUPFAM" id="SSF110836">
    <property type="entry name" value="Hypothetical protein SAV1430"/>
    <property type="match status" value="1"/>
</dbReference>
<sequence length="283" mass="31317">MSKFLSQAAINTLRNTRLGSRQLVRSFAGISNTRNHREAGHQEWGCGQSAGRGLLELRMPVACRRSMFIQTQDTPNPESLKFLPGVDVLGKGNTYDFPNGTTAHSSPLAKLLFRVEGVKGVFFGADFITISKQEGAEWSLIKPEVFAVIMDFFASGLPVLNDAQPNADTEILEDDDETVMMIKELLDTRIRPTVQEDGGDIVFMGYEAGVVKLKMQGSCSSCPSSIVTLKNGVQNMLQFYIPEVESVEQVFDEADRMIDSEFERFEKNLKTLKQQEPSGGGPH</sequence>
<comment type="function">
    <text evidence="1">Molecular scaffold for [Fe-S] cluster assembly of mitochondrial iron-sulfur proteins.</text>
</comment>
<comment type="subcellular location">
    <subcellularLocation>
        <location evidence="2">Mitochondrion</location>
    </subcellularLocation>
</comment>
<comment type="similarity">
    <text evidence="3">Belongs to the NifU family.</text>
</comment>